<reference key="1">
    <citation type="journal article" date="2011" name="J. Bacteriol.">
        <title>Comparative genomics of 28 Salmonella enterica isolates: evidence for CRISPR-mediated adaptive sublineage evolution.</title>
        <authorList>
            <person name="Fricke W.F."/>
            <person name="Mammel M.K."/>
            <person name="McDermott P.F."/>
            <person name="Tartera C."/>
            <person name="White D.G."/>
            <person name="Leclerc J.E."/>
            <person name="Ravel J."/>
            <person name="Cebula T.A."/>
        </authorList>
    </citation>
    <scope>NUCLEOTIDE SEQUENCE [LARGE SCALE GENOMIC DNA]</scope>
    <source>
        <strain>SL254</strain>
    </source>
</reference>
<name>GARL_SALNS</name>
<accession>B4T6B6</accession>
<evidence type="ECO:0000255" key="1">
    <source>
        <dbReference type="HAMAP-Rule" id="MF_01291"/>
    </source>
</evidence>
<comment type="function">
    <text evidence="1">Catalyzes the reversible retro-aldol cleavage of both 5-keto-4-deoxy-D-glucarate and 2-keto-3-deoxy-D-glucarate to pyruvate and tartronic semialdehyde.</text>
</comment>
<comment type="catalytic activity">
    <reaction evidence="1">
        <text>5-dehydro-4-deoxy-D-glucarate = 2-hydroxy-3-oxopropanoate + pyruvate</text>
        <dbReference type="Rhea" id="RHEA:27726"/>
        <dbReference type="ChEBI" id="CHEBI:15361"/>
        <dbReference type="ChEBI" id="CHEBI:42819"/>
        <dbReference type="ChEBI" id="CHEBI:57978"/>
    </reaction>
</comment>
<comment type="catalytic activity">
    <reaction evidence="1">
        <text>2-dehydro-3-deoxy-D-glucarate = 2-hydroxy-3-oxopropanoate + pyruvate</text>
        <dbReference type="Rhea" id="RHEA:10268"/>
        <dbReference type="ChEBI" id="CHEBI:15361"/>
        <dbReference type="ChEBI" id="CHEBI:57978"/>
        <dbReference type="ChEBI" id="CHEBI:58098"/>
        <dbReference type="EC" id="4.1.2.20"/>
    </reaction>
</comment>
<comment type="cofactor">
    <cofactor evidence="1">
        <name>Mg(2+)</name>
        <dbReference type="ChEBI" id="CHEBI:18420"/>
    </cofactor>
    <text evidence="1">Binds 1 Mg(2+) ion per subunit.</text>
</comment>
<comment type="pathway">
    <text evidence="1">Carbohydrate acid metabolism; galactarate degradation; D-glycerate from galactarate: step 2/3.</text>
</comment>
<comment type="subunit">
    <text evidence="1">Homohexamer; trimer of dimers.</text>
</comment>
<comment type="similarity">
    <text evidence="1">Belongs to the HpcH/HpaI aldolase family. KDGluc aldolase subfamily.</text>
</comment>
<protein>
    <recommendedName>
        <fullName evidence="1">5-keto-4-deoxy-D-glucarate aldolase</fullName>
        <shortName evidence="1">KDGluc aldolase</shortName>
        <shortName evidence="1">KDGlucA</shortName>
        <ecNumber evidence="1">4.1.2.20</ecNumber>
    </recommendedName>
    <alternativeName>
        <fullName evidence="1">2-dehydro-3-deoxy-D-glucarate aldolase</fullName>
    </alternativeName>
    <alternativeName>
        <fullName evidence="1">2-keto-3-deoxy-D-glucarate aldolase</fullName>
    </alternativeName>
    <alternativeName>
        <fullName evidence="1">5-dehydro-4-deoxy-D-glucarate aldolase</fullName>
    </alternativeName>
    <alternativeName>
        <fullName evidence="1">Alpha-keto-beta-deoxy-D-glucarate aldolase</fullName>
    </alternativeName>
</protein>
<proteinExistence type="inferred from homology"/>
<sequence length="256" mass="27321">MNNAIFPNKFKAALAAQQVQIGCWSALASPITTEVLGLAGFDWLVLDGEHAPNDVTTLIPQLMALKGSASAPVVRVPTNEPVIIKRMLDIGFYNFLIPFVETQEEAARAVASTRYPPEGIRGVSVSHRANMFGTVPDYFAQSNKNITIIVQIESQLGVDNVDAIAATEGVDGIFVGPSDLAAALGHLGNASHPDVQQTIQHIFARAKAHGKPCGILAPVEADARRYLEWGATFVAVGSDLGAFRASTQKLADTFKK</sequence>
<keyword id="KW-0456">Lyase</keyword>
<keyword id="KW-0460">Magnesium</keyword>
<keyword id="KW-0479">Metal-binding</keyword>
<feature type="chain" id="PRO_1000140416" description="5-keto-4-deoxy-D-glucarate aldolase">
    <location>
        <begin position="1"/>
        <end position="256"/>
    </location>
</feature>
<feature type="active site" description="Proton acceptor" evidence="1">
    <location>
        <position position="50"/>
    </location>
</feature>
<feature type="binding site" evidence="1">
    <location>
        <position position="151"/>
    </location>
    <ligand>
        <name>substrate</name>
    </ligand>
</feature>
<feature type="binding site" evidence="1">
    <location>
        <position position="153"/>
    </location>
    <ligand>
        <name>Mg(2+)</name>
        <dbReference type="ChEBI" id="CHEBI:18420"/>
    </ligand>
</feature>
<feature type="binding site" evidence="1">
    <location>
        <position position="178"/>
    </location>
    <ligand>
        <name>substrate</name>
    </ligand>
</feature>
<feature type="binding site" evidence="1">
    <location>
        <position position="179"/>
    </location>
    <ligand>
        <name>Mg(2+)</name>
        <dbReference type="ChEBI" id="CHEBI:18420"/>
    </ligand>
</feature>
<feature type="binding site" evidence="1">
    <location>
        <position position="179"/>
    </location>
    <ligand>
        <name>substrate</name>
    </ligand>
</feature>
<feature type="site" description="Transition state stabilizer" evidence="1">
    <location>
        <position position="75"/>
    </location>
</feature>
<feature type="site" description="Increases basicity of active site His" evidence="1">
    <location>
        <position position="89"/>
    </location>
</feature>
<organism>
    <name type="scientific">Salmonella newport (strain SL254)</name>
    <dbReference type="NCBI Taxonomy" id="423368"/>
    <lineage>
        <taxon>Bacteria</taxon>
        <taxon>Pseudomonadati</taxon>
        <taxon>Pseudomonadota</taxon>
        <taxon>Gammaproteobacteria</taxon>
        <taxon>Enterobacterales</taxon>
        <taxon>Enterobacteriaceae</taxon>
        <taxon>Salmonella</taxon>
    </lineage>
</organism>
<dbReference type="EC" id="4.1.2.20" evidence="1"/>
<dbReference type="EMBL" id="CP001113">
    <property type="protein sequence ID" value="ACF64925.1"/>
    <property type="molecule type" value="Genomic_DNA"/>
</dbReference>
<dbReference type="RefSeq" id="WP_001057715.1">
    <property type="nucleotide sequence ID" value="NZ_CCMR01000001.1"/>
</dbReference>
<dbReference type="SMR" id="B4T6B6"/>
<dbReference type="KEGG" id="see:SNSL254_A3511"/>
<dbReference type="HOGENOM" id="CLU_059964_1_0_6"/>
<dbReference type="UniPathway" id="UPA00565">
    <property type="reaction ID" value="UER00630"/>
</dbReference>
<dbReference type="Proteomes" id="UP000008824">
    <property type="component" value="Chromosome"/>
</dbReference>
<dbReference type="GO" id="GO:0005737">
    <property type="term" value="C:cytoplasm"/>
    <property type="evidence" value="ECO:0007669"/>
    <property type="project" value="TreeGrafter"/>
</dbReference>
<dbReference type="GO" id="GO:0008672">
    <property type="term" value="F:2-dehydro-3-deoxyglucarate aldolase activity"/>
    <property type="evidence" value="ECO:0007669"/>
    <property type="project" value="UniProtKB-UniRule"/>
</dbReference>
<dbReference type="GO" id="GO:0000287">
    <property type="term" value="F:magnesium ion binding"/>
    <property type="evidence" value="ECO:0007669"/>
    <property type="project" value="UniProtKB-UniRule"/>
</dbReference>
<dbReference type="GO" id="GO:0042838">
    <property type="term" value="P:D-glucarate catabolic process"/>
    <property type="evidence" value="ECO:0007669"/>
    <property type="project" value="UniProtKB-UniRule"/>
</dbReference>
<dbReference type="GO" id="GO:0046392">
    <property type="term" value="P:galactarate catabolic process"/>
    <property type="evidence" value="ECO:0007669"/>
    <property type="project" value="UniProtKB-UniRule"/>
</dbReference>
<dbReference type="FunFam" id="3.20.20.60:FF:000004">
    <property type="entry name" value="5-keto-4-deoxy-D-glucarate aldolase"/>
    <property type="match status" value="1"/>
</dbReference>
<dbReference type="Gene3D" id="3.20.20.60">
    <property type="entry name" value="Phosphoenolpyruvate-binding domains"/>
    <property type="match status" value="1"/>
</dbReference>
<dbReference type="HAMAP" id="MF_01291">
    <property type="entry name" value="KDGluc_aldolase"/>
    <property type="match status" value="1"/>
</dbReference>
<dbReference type="InterPro" id="IPR005000">
    <property type="entry name" value="Aldolase/citrate-lyase_domain"/>
</dbReference>
<dbReference type="InterPro" id="IPR017648">
    <property type="entry name" value="GarL"/>
</dbReference>
<dbReference type="InterPro" id="IPR050251">
    <property type="entry name" value="HpcH-HpaI_aldolase"/>
</dbReference>
<dbReference type="InterPro" id="IPR015813">
    <property type="entry name" value="Pyrv/PenolPyrv_kinase-like_dom"/>
</dbReference>
<dbReference type="InterPro" id="IPR040442">
    <property type="entry name" value="Pyrv_kinase-like_dom_sf"/>
</dbReference>
<dbReference type="NCBIfam" id="TIGR03239">
    <property type="entry name" value="GarL"/>
    <property type="match status" value="1"/>
</dbReference>
<dbReference type="NCBIfam" id="NF007849">
    <property type="entry name" value="PRK10558.1"/>
    <property type="match status" value="1"/>
</dbReference>
<dbReference type="PANTHER" id="PTHR30502">
    <property type="entry name" value="2-KETO-3-DEOXY-L-RHAMNONATE ALDOLASE"/>
    <property type="match status" value="1"/>
</dbReference>
<dbReference type="PANTHER" id="PTHR30502:SF4">
    <property type="entry name" value="5-KETO-4-DEOXY-D-GLUCARATE ALDOLASE"/>
    <property type="match status" value="1"/>
</dbReference>
<dbReference type="Pfam" id="PF03328">
    <property type="entry name" value="HpcH_HpaI"/>
    <property type="match status" value="1"/>
</dbReference>
<dbReference type="SUPFAM" id="SSF51621">
    <property type="entry name" value="Phosphoenolpyruvate/pyruvate domain"/>
    <property type="match status" value="1"/>
</dbReference>
<gene>
    <name evidence="1" type="primary">garL</name>
    <name type="ordered locus">SNSL254_A3511</name>
</gene>